<geneLocation type="chloroplast"/>
<feature type="chain" id="PRO_0000062292" description="Large ribosomal subunit protein uL16c">
    <location>
        <begin position="1"/>
        <end position="134"/>
    </location>
</feature>
<sequence>MLSPKRTKFRRPHRGHRRGRALRGNTIAFGDFAIQALESSWVTSRQIEAARRAMTRYARRGGKIWIRIFPDKAITMRPAETRMGSGKGSPEYWVAVVKAQKILFEMKGVPETIARASMRIACFKMPMKTRILQR</sequence>
<accession>Q9TL21</accession>
<reference key="1">
    <citation type="journal article" date="1999" name="Proc. Natl. Acad. Sci. U.S.A.">
        <title>The complete chloroplast DNA sequence of the green alga Nephroselmis olivacea: insights into the architecture of ancestral chloroplast genomes.</title>
        <authorList>
            <person name="Turmel M."/>
            <person name="Otis C."/>
            <person name="Lemieux C."/>
        </authorList>
    </citation>
    <scope>NUCLEOTIDE SEQUENCE [LARGE SCALE GENOMIC DNA]</scope>
    <source>
        <strain>NIES-484 / S-N-5-8</strain>
    </source>
</reference>
<proteinExistence type="inferred from homology"/>
<evidence type="ECO:0000255" key="1">
    <source>
        <dbReference type="HAMAP-Rule" id="MF_01342"/>
    </source>
</evidence>
<evidence type="ECO:0000305" key="2"/>
<keyword id="KW-0150">Chloroplast</keyword>
<keyword id="KW-0934">Plastid</keyword>
<keyword id="KW-0687">Ribonucleoprotein</keyword>
<keyword id="KW-0689">Ribosomal protein</keyword>
<name>RK16_NEPOL</name>
<protein>
    <recommendedName>
        <fullName evidence="1">Large ribosomal subunit protein uL16c</fullName>
    </recommendedName>
    <alternativeName>
        <fullName evidence="2">50S ribosomal protein L16, chloroplastic</fullName>
    </alternativeName>
</protein>
<dbReference type="EMBL" id="AF137379">
    <property type="protein sequence ID" value="AAD54795.1"/>
    <property type="molecule type" value="Genomic_DNA"/>
</dbReference>
<dbReference type="RefSeq" id="NP_050824.1">
    <property type="nucleotide sequence ID" value="NC_000927.1"/>
</dbReference>
<dbReference type="SMR" id="Q9TL21"/>
<dbReference type="GeneID" id="801999"/>
<dbReference type="GO" id="GO:0009507">
    <property type="term" value="C:chloroplast"/>
    <property type="evidence" value="ECO:0007669"/>
    <property type="project" value="UniProtKB-SubCell"/>
</dbReference>
<dbReference type="GO" id="GO:0005762">
    <property type="term" value="C:mitochondrial large ribosomal subunit"/>
    <property type="evidence" value="ECO:0007669"/>
    <property type="project" value="TreeGrafter"/>
</dbReference>
<dbReference type="GO" id="GO:0019843">
    <property type="term" value="F:rRNA binding"/>
    <property type="evidence" value="ECO:0007669"/>
    <property type="project" value="InterPro"/>
</dbReference>
<dbReference type="GO" id="GO:0003735">
    <property type="term" value="F:structural constituent of ribosome"/>
    <property type="evidence" value="ECO:0007669"/>
    <property type="project" value="InterPro"/>
</dbReference>
<dbReference type="GO" id="GO:0032543">
    <property type="term" value="P:mitochondrial translation"/>
    <property type="evidence" value="ECO:0007669"/>
    <property type="project" value="TreeGrafter"/>
</dbReference>
<dbReference type="CDD" id="cd01433">
    <property type="entry name" value="Ribosomal_L16_L10e"/>
    <property type="match status" value="1"/>
</dbReference>
<dbReference type="FunFam" id="3.90.1170.10:FF:000001">
    <property type="entry name" value="50S ribosomal protein L16"/>
    <property type="match status" value="1"/>
</dbReference>
<dbReference type="Gene3D" id="3.90.1170.10">
    <property type="entry name" value="Ribosomal protein L10e/L16"/>
    <property type="match status" value="1"/>
</dbReference>
<dbReference type="HAMAP" id="MF_01342">
    <property type="entry name" value="Ribosomal_uL16"/>
    <property type="match status" value="1"/>
</dbReference>
<dbReference type="InterPro" id="IPR047873">
    <property type="entry name" value="Ribosomal_uL16"/>
</dbReference>
<dbReference type="InterPro" id="IPR000114">
    <property type="entry name" value="Ribosomal_uL16_bact-type"/>
</dbReference>
<dbReference type="InterPro" id="IPR020798">
    <property type="entry name" value="Ribosomal_uL16_CS"/>
</dbReference>
<dbReference type="InterPro" id="IPR016180">
    <property type="entry name" value="Ribosomal_uL16_dom"/>
</dbReference>
<dbReference type="InterPro" id="IPR036920">
    <property type="entry name" value="Ribosomal_uL16_sf"/>
</dbReference>
<dbReference type="NCBIfam" id="TIGR01164">
    <property type="entry name" value="rplP_bact"/>
    <property type="match status" value="1"/>
</dbReference>
<dbReference type="PANTHER" id="PTHR12220">
    <property type="entry name" value="50S/60S RIBOSOMAL PROTEIN L16"/>
    <property type="match status" value="1"/>
</dbReference>
<dbReference type="PANTHER" id="PTHR12220:SF13">
    <property type="entry name" value="LARGE RIBOSOMAL SUBUNIT PROTEIN UL16M"/>
    <property type="match status" value="1"/>
</dbReference>
<dbReference type="Pfam" id="PF00252">
    <property type="entry name" value="Ribosomal_L16"/>
    <property type="match status" value="1"/>
</dbReference>
<dbReference type="PRINTS" id="PR00060">
    <property type="entry name" value="RIBOSOMALL16"/>
</dbReference>
<dbReference type="SUPFAM" id="SSF54686">
    <property type="entry name" value="Ribosomal protein L16p/L10e"/>
    <property type="match status" value="1"/>
</dbReference>
<dbReference type="PROSITE" id="PS00586">
    <property type="entry name" value="RIBOSOMAL_L16_1"/>
    <property type="match status" value="1"/>
</dbReference>
<dbReference type="PROSITE" id="PS00701">
    <property type="entry name" value="RIBOSOMAL_L16_2"/>
    <property type="match status" value="1"/>
</dbReference>
<organism>
    <name type="scientific">Nephroselmis olivacea</name>
    <name type="common">Green alga</name>
    <dbReference type="NCBI Taxonomy" id="31312"/>
    <lineage>
        <taxon>Eukaryota</taxon>
        <taxon>Viridiplantae</taxon>
        <taxon>Chlorophyta</taxon>
        <taxon>Nephroselmidophyceae</taxon>
        <taxon>Nephroselmidales</taxon>
        <taxon>Nephroselmidaceae</taxon>
        <taxon>Nephroselmis</taxon>
    </lineage>
</organism>
<comment type="subunit">
    <text evidence="1">Part of the 50S ribosomal subunit.</text>
</comment>
<comment type="subcellular location">
    <subcellularLocation>
        <location>Plastid</location>
        <location>Chloroplast</location>
    </subcellularLocation>
</comment>
<comment type="similarity">
    <text evidence="1">Belongs to the universal ribosomal protein uL16 family.</text>
</comment>
<gene>
    <name evidence="1" type="primary">rpl16</name>
</gene>